<sequence length="381" mass="42126">MKKISLLGATGSIGWQTYDILKEQREAFQLVAFSSGKNMEKTREMIDNLKPELVSVQLEEDALLLAKEYPTIHFTFGAQGLVEVATHPASTVLVNAVLGSVGLESTLAAIRMGKTIAIANKETLVTAGHLVMAEAKKYNATILPVDSEHSAIFQSMNGENPKDIERLIITASGGSFRDKTRDQLKHVTVADALNHPNWSMGAKITIDSATMMNKGLEVIEAHVLFDMPYEKIDVLLHRESIIHSLVEYHDTSVIAQLGTPDMRVPIQYALSYPDRIPLHNGQRLNLAQIGQLHFQEMDFERYPALRLAYEAGRTGGTILTAMNAANEAAVAAFLQGKITFLQIDETIERVMQAHQNIAIPDLQTILQVDSETRKIVLDMVK</sequence>
<feature type="chain" id="PRO_1000098505" description="1-deoxy-D-xylulose 5-phosphate reductoisomerase">
    <location>
        <begin position="1"/>
        <end position="381"/>
    </location>
</feature>
<feature type="binding site" evidence="1">
    <location>
        <position position="10"/>
    </location>
    <ligand>
        <name>NADPH</name>
        <dbReference type="ChEBI" id="CHEBI:57783"/>
    </ligand>
</feature>
<feature type="binding site" evidence="1">
    <location>
        <position position="11"/>
    </location>
    <ligand>
        <name>NADPH</name>
        <dbReference type="ChEBI" id="CHEBI:57783"/>
    </ligand>
</feature>
<feature type="binding site" evidence="1">
    <location>
        <position position="12"/>
    </location>
    <ligand>
        <name>NADPH</name>
        <dbReference type="ChEBI" id="CHEBI:57783"/>
    </ligand>
</feature>
<feature type="binding site" evidence="1">
    <location>
        <position position="13"/>
    </location>
    <ligand>
        <name>NADPH</name>
        <dbReference type="ChEBI" id="CHEBI:57783"/>
    </ligand>
</feature>
<feature type="binding site" evidence="1">
    <location>
        <position position="36"/>
    </location>
    <ligand>
        <name>NADPH</name>
        <dbReference type="ChEBI" id="CHEBI:57783"/>
    </ligand>
</feature>
<feature type="binding site" evidence="1">
    <location>
        <position position="37"/>
    </location>
    <ligand>
        <name>NADPH</name>
        <dbReference type="ChEBI" id="CHEBI:57783"/>
    </ligand>
</feature>
<feature type="binding site" evidence="1">
    <location>
        <position position="38"/>
    </location>
    <ligand>
        <name>NADPH</name>
        <dbReference type="ChEBI" id="CHEBI:57783"/>
    </ligand>
</feature>
<feature type="binding site" evidence="1">
    <location>
        <position position="120"/>
    </location>
    <ligand>
        <name>NADPH</name>
        <dbReference type="ChEBI" id="CHEBI:57783"/>
    </ligand>
</feature>
<feature type="binding site" evidence="1">
    <location>
        <position position="121"/>
    </location>
    <ligand>
        <name>1-deoxy-D-xylulose 5-phosphate</name>
        <dbReference type="ChEBI" id="CHEBI:57792"/>
    </ligand>
</feature>
<feature type="binding site" evidence="1">
    <location>
        <position position="122"/>
    </location>
    <ligand>
        <name>NADPH</name>
        <dbReference type="ChEBI" id="CHEBI:57783"/>
    </ligand>
</feature>
<feature type="binding site" evidence="1">
    <location>
        <position position="146"/>
    </location>
    <ligand>
        <name>Mn(2+)</name>
        <dbReference type="ChEBI" id="CHEBI:29035"/>
    </ligand>
</feature>
<feature type="binding site" evidence="1">
    <location>
        <position position="147"/>
    </location>
    <ligand>
        <name>1-deoxy-D-xylulose 5-phosphate</name>
        <dbReference type="ChEBI" id="CHEBI:57792"/>
    </ligand>
</feature>
<feature type="binding site" evidence="1">
    <location>
        <position position="148"/>
    </location>
    <ligand>
        <name>1-deoxy-D-xylulose 5-phosphate</name>
        <dbReference type="ChEBI" id="CHEBI:57792"/>
    </ligand>
</feature>
<feature type="binding site" evidence="1">
    <location>
        <position position="148"/>
    </location>
    <ligand>
        <name>Mn(2+)</name>
        <dbReference type="ChEBI" id="CHEBI:29035"/>
    </ligand>
</feature>
<feature type="binding site" evidence="1">
    <location>
        <position position="172"/>
    </location>
    <ligand>
        <name>1-deoxy-D-xylulose 5-phosphate</name>
        <dbReference type="ChEBI" id="CHEBI:57792"/>
    </ligand>
</feature>
<feature type="binding site" evidence="1">
    <location>
        <position position="195"/>
    </location>
    <ligand>
        <name>1-deoxy-D-xylulose 5-phosphate</name>
        <dbReference type="ChEBI" id="CHEBI:57792"/>
    </ligand>
</feature>
<feature type="binding site" evidence="1">
    <location>
        <position position="201"/>
    </location>
    <ligand>
        <name>NADPH</name>
        <dbReference type="ChEBI" id="CHEBI:57783"/>
    </ligand>
</feature>
<feature type="binding site" evidence="1">
    <location>
        <position position="208"/>
    </location>
    <ligand>
        <name>1-deoxy-D-xylulose 5-phosphate</name>
        <dbReference type="ChEBI" id="CHEBI:57792"/>
    </ligand>
</feature>
<feature type="binding site" evidence="1">
    <location>
        <position position="213"/>
    </location>
    <ligand>
        <name>1-deoxy-D-xylulose 5-phosphate</name>
        <dbReference type="ChEBI" id="CHEBI:57792"/>
    </ligand>
</feature>
<feature type="binding site" evidence="1">
    <location>
        <position position="214"/>
    </location>
    <ligand>
        <name>1-deoxy-D-xylulose 5-phosphate</name>
        <dbReference type="ChEBI" id="CHEBI:57792"/>
    </ligand>
</feature>
<feature type="binding site" evidence="1">
    <location>
        <position position="217"/>
    </location>
    <ligand>
        <name>1-deoxy-D-xylulose 5-phosphate</name>
        <dbReference type="ChEBI" id="CHEBI:57792"/>
    </ligand>
</feature>
<feature type="binding site" evidence="1">
    <location>
        <position position="217"/>
    </location>
    <ligand>
        <name>Mn(2+)</name>
        <dbReference type="ChEBI" id="CHEBI:29035"/>
    </ligand>
</feature>
<comment type="function">
    <text evidence="1">Catalyzes the NADPH-dependent rearrangement and reduction of 1-deoxy-D-xylulose-5-phosphate (DXP) to 2-C-methyl-D-erythritol 4-phosphate (MEP).</text>
</comment>
<comment type="catalytic activity">
    <reaction evidence="1">
        <text>2-C-methyl-D-erythritol 4-phosphate + NADP(+) = 1-deoxy-D-xylulose 5-phosphate + NADPH + H(+)</text>
        <dbReference type="Rhea" id="RHEA:13717"/>
        <dbReference type="ChEBI" id="CHEBI:15378"/>
        <dbReference type="ChEBI" id="CHEBI:57783"/>
        <dbReference type="ChEBI" id="CHEBI:57792"/>
        <dbReference type="ChEBI" id="CHEBI:58262"/>
        <dbReference type="ChEBI" id="CHEBI:58349"/>
        <dbReference type="EC" id="1.1.1.267"/>
    </reaction>
    <physiologicalReaction direction="right-to-left" evidence="1">
        <dbReference type="Rhea" id="RHEA:13719"/>
    </physiologicalReaction>
</comment>
<comment type="cofactor">
    <cofactor evidence="1">
        <name>Mg(2+)</name>
        <dbReference type="ChEBI" id="CHEBI:18420"/>
    </cofactor>
    <cofactor evidence="1">
        <name>Mn(2+)</name>
        <dbReference type="ChEBI" id="CHEBI:29035"/>
    </cofactor>
</comment>
<comment type="pathway">
    <text evidence="1">Isoprenoid biosynthesis; isopentenyl diphosphate biosynthesis via DXP pathway; isopentenyl diphosphate from 1-deoxy-D-xylulose 5-phosphate: step 1/6.</text>
</comment>
<comment type="similarity">
    <text evidence="1">Belongs to the DXR family.</text>
</comment>
<dbReference type="EC" id="1.1.1.267" evidence="1"/>
<dbReference type="EMBL" id="CP000817">
    <property type="protein sequence ID" value="ACA39188.1"/>
    <property type="molecule type" value="Genomic_DNA"/>
</dbReference>
<dbReference type="RefSeq" id="WP_012293297.1">
    <property type="nucleotide sequence ID" value="NC_010382.1"/>
</dbReference>
<dbReference type="SMR" id="B1HQZ7"/>
<dbReference type="EnsemblBacteria" id="ACA39188">
    <property type="protein sequence ID" value="ACA39188"/>
    <property type="gene ID" value="Bsph_1590"/>
</dbReference>
<dbReference type="KEGG" id="lsp:Bsph_1590"/>
<dbReference type="HOGENOM" id="CLU_035714_4_0_9"/>
<dbReference type="UniPathway" id="UPA00056">
    <property type="reaction ID" value="UER00092"/>
</dbReference>
<dbReference type="Proteomes" id="UP000002164">
    <property type="component" value="Chromosome"/>
</dbReference>
<dbReference type="GO" id="GO:0030604">
    <property type="term" value="F:1-deoxy-D-xylulose-5-phosphate reductoisomerase activity"/>
    <property type="evidence" value="ECO:0007669"/>
    <property type="project" value="UniProtKB-UniRule"/>
</dbReference>
<dbReference type="GO" id="GO:0030145">
    <property type="term" value="F:manganese ion binding"/>
    <property type="evidence" value="ECO:0007669"/>
    <property type="project" value="TreeGrafter"/>
</dbReference>
<dbReference type="GO" id="GO:0070402">
    <property type="term" value="F:NADPH binding"/>
    <property type="evidence" value="ECO:0007669"/>
    <property type="project" value="InterPro"/>
</dbReference>
<dbReference type="GO" id="GO:0051484">
    <property type="term" value="P:isopentenyl diphosphate biosynthetic process, methylerythritol 4-phosphate pathway involved in terpenoid biosynthetic process"/>
    <property type="evidence" value="ECO:0007669"/>
    <property type="project" value="TreeGrafter"/>
</dbReference>
<dbReference type="FunFam" id="3.40.50.720:FF:000045">
    <property type="entry name" value="1-deoxy-D-xylulose 5-phosphate reductoisomerase"/>
    <property type="match status" value="1"/>
</dbReference>
<dbReference type="Gene3D" id="1.10.1740.10">
    <property type="match status" value="1"/>
</dbReference>
<dbReference type="Gene3D" id="3.40.50.720">
    <property type="entry name" value="NAD(P)-binding Rossmann-like Domain"/>
    <property type="match status" value="1"/>
</dbReference>
<dbReference type="HAMAP" id="MF_00183">
    <property type="entry name" value="DXP_reductoisom"/>
    <property type="match status" value="1"/>
</dbReference>
<dbReference type="InterPro" id="IPR003821">
    <property type="entry name" value="DXP_reductoisomerase"/>
</dbReference>
<dbReference type="InterPro" id="IPR013644">
    <property type="entry name" value="DXP_reductoisomerase_C"/>
</dbReference>
<dbReference type="InterPro" id="IPR013512">
    <property type="entry name" value="DXP_reductoisomerase_N"/>
</dbReference>
<dbReference type="InterPro" id="IPR026877">
    <property type="entry name" value="DXPR_C"/>
</dbReference>
<dbReference type="InterPro" id="IPR036169">
    <property type="entry name" value="DXPR_C_sf"/>
</dbReference>
<dbReference type="InterPro" id="IPR036291">
    <property type="entry name" value="NAD(P)-bd_dom_sf"/>
</dbReference>
<dbReference type="NCBIfam" id="TIGR00243">
    <property type="entry name" value="Dxr"/>
    <property type="match status" value="1"/>
</dbReference>
<dbReference type="NCBIfam" id="NF009114">
    <property type="entry name" value="PRK12464.1"/>
    <property type="match status" value="1"/>
</dbReference>
<dbReference type="PANTHER" id="PTHR30525">
    <property type="entry name" value="1-DEOXY-D-XYLULOSE 5-PHOSPHATE REDUCTOISOMERASE"/>
    <property type="match status" value="1"/>
</dbReference>
<dbReference type="PANTHER" id="PTHR30525:SF0">
    <property type="entry name" value="1-DEOXY-D-XYLULOSE 5-PHOSPHATE REDUCTOISOMERASE, CHLOROPLASTIC"/>
    <property type="match status" value="1"/>
</dbReference>
<dbReference type="Pfam" id="PF08436">
    <property type="entry name" value="DXP_redisom_C"/>
    <property type="match status" value="1"/>
</dbReference>
<dbReference type="Pfam" id="PF02670">
    <property type="entry name" value="DXP_reductoisom"/>
    <property type="match status" value="1"/>
</dbReference>
<dbReference type="Pfam" id="PF13288">
    <property type="entry name" value="DXPR_C"/>
    <property type="match status" value="1"/>
</dbReference>
<dbReference type="PIRSF" id="PIRSF006205">
    <property type="entry name" value="Dxp_reductismrs"/>
    <property type="match status" value="1"/>
</dbReference>
<dbReference type="SUPFAM" id="SSF69055">
    <property type="entry name" value="1-deoxy-D-xylulose-5-phosphate reductoisomerase, C-terminal domain"/>
    <property type="match status" value="1"/>
</dbReference>
<dbReference type="SUPFAM" id="SSF55347">
    <property type="entry name" value="Glyceraldehyde-3-phosphate dehydrogenase-like, C-terminal domain"/>
    <property type="match status" value="1"/>
</dbReference>
<dbReference type="SUPFAM" id="SSF51735">
    <property type="entry name" value="NAD(P)-binding Rossmann-fold domains"/>
    <property type="match status" value="1"/>
</dbReference>
<reference key="1">
    <citation type="journal article" date="2008" name="J. Bacteriol.">
        <title>Complete genome sequence of the mosquitocidal bacterium Bacillus sphaericus C3-41 and comparison with those of closely related Bacillus species.</title>
        <authorList>
            <person name="Hu X."/>
            <person name="Fan W."/>
            <person name="Han B."/>
            <person name="Liu H."/>
            <person name="Zheng D."/>
            <person name="Li Q."/>
            <person name="Dong W."/>
            <person name="Yan J."/>
            <person name="Gao M."/>
            <person name="Berry C."/>
            <person name="Yuan Z."/>
        </authorList>
    </citation>
    <scope>NUCLEOTIDE SEQUENCE [LARGE SCALE GENOMIC DNA]</scope>
    <source>
        <strain>C3-41</strain>
    </source>
</reference>
<accession>B1HQZ7</accession>
<proteinExistence type="inferred from homology"/>
<gene>
    <name evidence="1" type="primary">dxr</name>
    <name type="ordered locus">Bsph_1590</name>
</gene>
<name>DXR_LYSSC</name>
<evidence type="ECO:0000255" key="1">
    <source>
        <dbReference type="HAMAP-Rule" id="MF_00183"/>
    </source>
</evidence>
<protein>
    <recommendedName>
        <fullName evidence="1">1-deoxy-D-xylulose 5-phosphate reductoisomerase</fullName>
        <shortName evidence="1">DXP reductoisomerase</shortName>
        <ecNumber evidence="1">1.1.1.267</ecNumber>
    </recommendedName>
    <alternativeName>
        <fullName evidence="1">1-deoxyxylulose-5-phosphate reductoisomerase</fullName>
    </alternativeName>
    <alternativeName>
        <fullName evidence="1">2-C-methyl-D-erythritol 4-phosphate synthase</fullName>
    </alternativeName>
</protein>
<organism>
    <name type="scientific">Lysinibacillus sphaericus (strain C3-41)</name>
    <dbReference type="NCBI Taxonomy" id="444177"/>
    <lineage>
        <taxon>Bacteria</taxon>
        <taxon>Bacillati</taxon>
        <taxon>Bacillota</taxon>
        <taxon>Bacilli</taxon>
        <taxon>Bacillales</taxon>
        <taxon>Bacillaceae</taxon>
        <taxon>Lysinibacillus</taxon>
    </lineage>
</organism>
<keyword id="KW-0414">Isoprene biosynthesis</keyword>
<keyword id="KW-0464">Manganese</keyword>
<keyword id="KW-0479">Metal-binding</keyword>
<keyword id="KW-0521">NADP</keyword>
<keyword id="KW-0560">Oxidoreductase</keyword>